<reference key="1">
    <citation type="submission" date="2009-01" db="EMBL/GenBank/DDBJ databases">
        <title>Complete sequence of Chloroflexus sp. Y-400-fl.</title>
        <authorList>
            <consortium name="US DOE Joint Genome Institute"/>
            <person name="Lucas S."/>
            <person name="Copeland A."/>
            <person name="Lapidus A."/>
            <person name="Glavina del Rio T."/>
            <person name="Dalin E."/>
            <person name="Tice H."/>
            <person name="Bruce D."/>
            <person name="Goodwin L."/>
            <person name="Pitluck S."/>
            <person name="Sims D."/>
            <person name="Kiss H."/>
            <person name="Brettin T."/>
            <person name="Detter J.C."/>
            <person name="Han C."/>
            <person name="Larimer F."/>
            <person name="Land M."/>
            <person name="Hauser L."/>
            <person name="Kyrpides N."/>
            <person name="Ovchinnikova G."/>
            <person name="Bryant D.A."/>
            <person name="Richardson P."/>
        </authorList>
    </citation>
    <scope>NUCLEOTIDE SEQUENCE [LARGE SCALE GENOMIC DNA]</scope>
    <source>
        <strain>ATCC 29364 / DSM 637 / Y-400-fl</strain>
    </source>
</reference>
<sequence length="461" mass="51005">MEHRLWGGRFSEPTAAEMRRFNDSFHFDVRLAEVDIAGSIAWAGALLQAGLINETEHADLVRGLELVRAEFANGSFVAAAGDEDIHTAVERRLRELIGDAALKLHTGRSRNDQVATDMRLYTIGIARQLDRRLRDLQLALLAQAEQHTATVMPGYTHLQRAQPITFGHWCLAYVEMFARDRSRLNDAIRRMRVLPLGAGALAGNSLGVERERLTELLDEFDELSANSLDAVSDRDFVAEVLFACALIGVHLSRLAEDVILYASAEFGFLELADAYSTGSSLMPQKKNPDSMELLRGKSGRLLGNLVALLTVLKGLPLTYNKDMQEDKEPLFDSFDTLDLGLQVAAAAIATMTVRPERMAAALDDAMLATDLADELVRRGVPFRVAHSKVGQLVQRALTRGVSLRQLPLADYQAVEPSLDASIYDVFDMQRSVAQKASYGGTAPQRVREQCARWRDSLLNDE</sequence>
<proteinExistence type="inferred from homology"/>
<name>ARLY_CHLSY</name>
<evidence type="ECO:0000255" key="1">
    <source>
        <dbReference type="HAMAP-Rule" id="MF_00006"/>
    </source>
</evidence>
<accession>B9LD91</accession>
<protein>
    <recommendedName>
        <fullName evidence="1">Argininosuccinate lyase</fullName>
        <shortName evidence="1">ASAL</shortName>
        <ecNumber evidence="1">4.3.2.1</ecNumber>
    </recommendedName>
    <alternativeName>
        <fullName evidence="1">Arginosuccinase</fullName>
    </alternativeName>
</protein>
<gene>
    <name evidence="1" type="primary">argH</name>
    <name type="ordered locus">Chy400_3610</name>
</gene>
<feature type="chain" id="PRO_1000116314" description="Argininosuccinate lyase">
    <location>
        <begin position="1"/>
        <end position="461"/>
    </location>
</feature>
<organism>
    <name type="scientific">Chloroflexus aurantiacus (strain ATCC 29364 / DSM 637 / Y-400-fl)</name>
    <dbReference type="NCBI Taxonomy" id="480224"/>
    <lineage>
        <taxon>Bacteria</taxon>
        <taxon>Bacillati</taxon>
        <taxon>Chloroflexota</taxon>
        <taxon>Chloroflexia</taxon>
        <taxon>Chloroflexales</taxon>
        <taxon>Chloroflexineae</taxon>
        <taxon>Chloroflexaceae</taxon>
        <taxon>Chloroflexus</taxon>
    </lineage>
</organism>
<comment type="catalytic activity">
    <reaction evidence="1">
        <text>2-(N(omega)-L-arginino)succinate = fumarate + L-arginine</text>
        <dbReference type="Rhea" id="RHEA:24020"/>
        <dbReference type="ChEBI" id="CHEBI:29806"/>
        <dbReference type="ChEBI" id="CHEBI:32682"/>
        <dbReference type="ChEBI" id="CHEBI:57472"/>
        <dbReference type="EC" id="4.3.2.1"/>
    </reaction>
</comment>
<comment type="pathway">
    <text evidence="1">Amino-acid biosynthesis; L-arginine biosynthesis; L-arginine from L-ornithine and carbamoyl phosphate: step 3/3.</text>
</comment>
<comment type="subcellular location">
    <subcellularLocation>
        <location evidence="1">Cytoplasm</location>
    </subcellularLocation>
</comment>
<comment type="similarity">
    <text evidence="1">Belongs to the lyase 1 family. Argininosuccinate lyase subfamily.</text>
</comment>
<dbReference type="EC" id="4.3.2.1" evidence="1"/>
<dbReference type="EMBL" id="CP001364">
    <property type="protein sequence ID" value="ACM54980.1"/>
    <property type="molecule type" value="Genomic_DNA"/>
</dbReference>
<dbReference type="SMR" id="B9LD91"/>
<dbReference type="KEGG" id="chl:Chy400_3610"/>
<dbReference type="HOGENOM" id="CLU_027272_2_3_0"/>
<dbReference type="OrthoDB" id="9769623at2"/>
<dbReference type="UniPathway" id="UPA00068">
    <property type="reaction ID" value="UER00114"/>
</dbReference>
<dbReference type="GO" id="GO:0005829">
    <property type="term" value="C:cytosol"/>
    <property type="evidence" value="ECO:0007669"/>
    <property type="project" value="TreeGrafter"/>
</dbReference>
<dbReference type="GO" id="GO:0004056">
    <property type="term" value="F:argininosuccinate lyase activity"/>
    <property type="evidence" value="ECO:0007669"/>
    <property type="project" value="UniProtKB-UniRule"/>
</dbReference>
<dbReference type="GO" id="GO:0042450">
    <property type="term" value="P:arginine biosynthetic process via ornithine"/>
    <property type="evidence" value="ECO:0007669"/>
    <property type="project" value="InterPro"/>
</dbReference>
<dbReference type="GO" id="GO:0006526">
    <property type="term" value="P:L-arginine biosynthetic process"/>
    <property type="evidence" value="ECO:0007669"/>
    <property type="project" value="UniProtKB-UniRule"/>
</dbReference>
<dbReference type="CDD" id="cd01359">
    <property type="entry name" value="Argininosuccinate_lyase"/>
    <property type="match status" value="1"/>
</dbReference>
<dbReference type="FunFam" id="1.10.275.10:FF:000002">
    <property type="entry name" value="Argininosuccinate lyase"/>
    <property type="match status" value="1"/>
</dbReference>
<dbReference type="FunFam" id="1.10.40.30:FF:000001">
    <property type="entry name" value="Argininosuccinate lyase"/>
    <property type="match status" value="1"/>
</dbReference>
<dbReference type="FunFam" id="1.20.200.10:FF:000002">
    <property type="entry name" value="Argininosuccinate lyase"/>
    <property type="match status" value="1"/>
</dbReference>
<dbReference type="Gene3D" id="1.10.40.30">
    <property type="entry name" value="Fumarase/aspartase (C-terminal domain)"/>
    <property type="match status" value="1"/>
</dbReference>
<dbReference type="Gene3D" id="1.20.200.10">
    <property type="entry name" value="Fumarase/aspartase (Central domain)"/>
    <property type="match status" value="1"/>
</dbReference>
<dbReference type="Gene3D" id="1.10.275.10">
    <property type="entry name" value="Fumarase/aspartase (N-terminal domain)"/>
    <property type="match status" value="1"/>
</dbReference>
<dbReference type="HAMAP" id="MF_00006">
    <property type="entry name" value="Arg_succ_lyase"/>
    <property type="match status" value="1"/>
</dbReference>
<dbReference type="InterPro" id="IPR029419">
    <property type="entry name" value="Arg_succ_lyase_C"/>
</dbReference>
<dbReference type="InterPro" id="IPR009049">
    <property type="entry name" value="Argininosuccinate_lyase"/>
</dbReference>
<dbReference type="InterPro" id="IPR024083">
    <property type="entry name" value="Fumarase/histidase_N"/>
</dbReference>
<dbReference type="InterPro" id="IPR020557">
    <property type="entry name" value="Fumarate_lyase_CS"/>
</dbReference>
<dbReference type="InterPro" id="IPR000362">
    <property type="entry name" value="Fumarate_lyase_fam"/>
</dbReference>
<dbReference type="InterPro" id="IPR022761">
    <property type="entry name" value="Fumarate_lyase_N"/>
</dbReference>
<dbReference type="InterPro" id="IPR008948">
    <property type="entry name" value="L-Aspartase-like"/>
</dbReference>
<dbReference type="NCBIfam" id="TIGR00838">
    <property type="entry name" value="argH"/>
    <property type="match status" value="1"/>
</dbReference>
<dbReference type="PANTHER" id="PTHR43814">
    <property type="entry name" value="ARGININOSUCCINATE LYASE"/>
    <property type="match status" value="1"/>
</dbReference>
<dbReference type="PANTHER" id="PTHR43814:SF1">
    <property type="entry name" value="ARGININOSUCCINATE LYASE"/>
    <property type="match status" value="1"/>
</dbReference>
<dbReference type="Pfam" id="PF14698">
    <property type="entry name" value="ASL_C2"/>
    <property type="match status" value="1"/>
</dbReference>
<dbReference type="Pfam" id="PF00206">
    <property type="entry name" value="Lyase_1"/>
    <property type="match status" value="1"/>
</dbReference>
<dbReference type="PRINTS" id="PR00145">
    <property type="entry name" value="ARGSUCLYASE"/>
</dbReference>
<dbReference type="PRINTS" id="PR00149">
    <property type="entry name" value="FUMRATELYASE"/>
</dbReference>
<dbReference type="SUPFAM" id="SSF48557">
    <property type="entry name" value="L-aspartase-like"/>
    <property type="match status" value="1"/>
</dbReference>
<dbReference type="PROSITE" id="PS00163">
    <property type="entry name" value="FUMARATE_LYASES"/>
    <property type="match status" value="1"/>
</dbReference>
<keyword id="KW-0028">Amino-acid biosynthesis</keyword>
<keyword id="KW-0055">Arginine biosynthesis</keyword>
<keyword id="KW-0963">Cytoplasm</keyword>
<keyword id="KW-0456">Lyase</keyword>